<geneLocation type="chloroplast"/>
<evidence type="ECO:0000305" key="1"/>
<reference key="1">
    <citation type="journal article" date="1995" name="Plant Mol. Biol. Rep.">
        <title>Complete nucleotide sequence of the Porphyra purpurea chloroplast genome.</title>
        <authorList>
            <person name="Reith M.E."/>
            <person name="Munholland J."/>
        </authorList>
    </citation>
    <scope>NUCLEOTIDE SEQUENCE [LARGE SCALE GENOMIC DNA]</scope>
    <source>
        <strain>Avonport</strain>
    </source>
</reference>
<proteinExistence type="inferred from homology"/>
<name>YCF40_PORPU</name>
<feature type="chain" id="PRO_0000217359" description="Uncharacterized protein ycf40">
    <location>
        <begin position="1"/>
        <end position="71"/>
    </location>
</feature>
<sequence>MINKNISIQINGEPFNCSEPLSLQFLLNYLDFNSERIAIEINSTLLPERLFHSTYINDQDKVEIITIVGGG</sequence>
<organism>
    <name type="scientific">Porphyra purpurea</name>
    <name type="common">Red seaweed</name>
    <name type="synonym">Ulva purpurea</name>
    <dbReference type="NCBI Taxonomy" id="2787"/>
    <lineage>
        <taxon>Eukaryota</taxon>
        <taxon>Rhodophyta</taxon>
        <taxon>Bangiophyceae</taxon>
        <taxon>Bangiales</taxon>
        <taxon>Bangiaceae</taxon>
        <taxon>Porphyra</taxon>
    </lineage>
</organism>
<comment type="subcellular location">
    <subcellularLocation>
        <location>Plastid</location>
        <location>Chloroplast</location>
    </subcellularLocation>
</comment>
<comment type="similarity">
    <text evidence="1">Belongs to the ycf40 family.</text>
</comment>
<keyword id="KW-0150">Chloroplast</keyword>
<keyword id="KW-0934">Plastid</keyword>
<dbReference type="EMBL" id="U38804">
    <property type="protein sequence ID" value="AAC08230.1"/>
    <property type="molecule type" value="Genomic_DNA"/>
</dbReference>
<dbReference type="PIR" id="S73265">
    <property type="entry name" value="S73265"/>
</dbReference>
<dbReference type="RefSeq" id="NP_053954.1">
    <property type="nucleotide sequence ID" value="NC_000925.1"/>
</dbReference>
<dbReference type="SMR" id="P51344"/>
<dbReference type="GO" id="GO:0009507">
    <property type="term" value="C:chloroplast"/>
    <property type="evidence" value="ECO:0007669"/>
    <property type="project" value="UniProtKB-SubCell"/>
</dbReference>
<dbReference type="CDD" id="cd00565">
    <property type="entry name" value="Ubl_ThiS"/>
    <property type="match status" value="1"/>
</dbReference>
<dbReference type="Gene3D" id="3.10.20.30">
    <property type="match status" value="1"/>
</dbReference>
<dbReference type="InterPro" id="IPR012675">
    <property type="entry name" value="Beta-grasp_dom_sf"/>
</dbReference>
<dbReference type="InterPro" id="IPR016155">
    <property type="entry name" value="Mopterin_synth/thiamin_S_b"/>
</dbReference>
<dbReference type="InterPro" id="IPR010035">
    <property type="entry name" value="Thi_S"/>
</dbReference>
<dbReference type="InterPro" id="IPR003749">
    <property type="entry name" value="ThiS/MoaD-like"/>
</dbReference>
<dbReference type="NCBIfam" id="TIGR01683">
    <property type="entry name" value="thiS"/>
    <property type="match status" value="1"/>
</dbReference>
<dbReference type="PANTHER" id="PTHR34472">
    <property type="entry name" value="SULFUR CARRIER PROTEIN THIS"/>
    <property type="match status" value="1"/>
</dbReference>
<dbReference type="PANTHER" id="PTHR34472:SF1">
    <property type="entry name" value="SULFUR CARRIER PROTEIN THIS"/>
    <property type="match status" value="1"/>
</dbReference>
<dbReference type="Pfam" id="PF02597">
    <property type="entry name" value="ThiS"/>
    <property type="match status" value="1"/>
</dbReference>
<dbReference type="SUPFAM" id="SSF54285">
    <property type="entry name" value="MoaD/ThiS"/>
    <property type="match status" value="1"/>
</dbReference>
<protein>
    <recommendedName>
        <fullName>Uncharacterized protein ycf40</fullName>
    </recommendedName>
</protein>
<gene>
    <name type="primary">ycf40</name>
</gene>
<accession>P51344</accession>